<accession>Q8NDF8</accession>
<accession>B4DV38</accession>
<accession>Q9NW67</accession>
<accession>Q9Y6C0</accession>
<reference key="1">
    <citation type="journal article" date="2004" name="Nat. Genet.">
        <title>Complete sequencing and characterization of 21,243 full-length human cDNAs.</title>
        <authorList>
            <person name="Ota T."/>
            <person name="Suzuki Y."/>
            <person name="Nishikawa T."/>
            <person name="Otsuki T."/>
            <person name="Sugiyama T."/>
            <person name="Irie R."/>
            <person name="Wakamatsu A."/>
            <person name="Hayashi K."/>
            <person name="Sato H."/>
            <person name="Nagai K."/>
            <person name="Kimura K."/>
            <person name="Makita H."/>
            <person name="Sekine M."/>
            <person name="Obayashi M."/>
            <person name="Nishi T."/>
            <person name="Shibahara T."/>
            <person name="Tanaka T."/>
            <person name="Ishii S."/>
            <person name="Yamamoto J."/>
            <person name="Saito K."/>
            <person name="Kawai Y."/>
            <person name="Isono Y."/>
            <person name="Nakamura Y."/>
            <person name="Nagahari K."/>
            <person name="Murakami K."/>
            <person name="Yasuda T."/>
            <person name="Iwayanagi T."/>
            <person name="Wagatsuma M."/>
            <person name="Shiratori A."/>
            <person name="Sudo H."/>
            <person name="Hosoiri T."/>
            <person name="Kaku Y."/>
            <person name="Kodaira H."/>
            <person name="Kondo H."/>
            <person name="Sugawara M."/>
            <person name="Takahashi M."/>
            <person name="Kanda K."/>
            <person name="Yokoi T."/>
            <person name="Furuya T."/>
            <person name="Kikkawa E."/>
            <person name="Omura Y."/>
            <person name="Abe K."/>
            <person name="Kamihara K."/>
            <person name="Katsuta N."/>
            <person name="Sato K."/>
            <person name="Tanikawa M."/>
            <person name="Yamazaki M."/>
            <person name="Ninomiya K."/>
            <person name="Ishibashi T."/>
            <person name="Yamashita H."/>
            <person name="Murakawa K."/>
            <person name="Fujimori K."/>
            <person name="Tanai H."/>
            <person name="Kimata M."/>
            <person name="Watanabe M."/>
            <person name="Hiraoka S."/>
            <person name="Chiba Y."/>
            <person name="Ishida S."/>
            <person name="Ono Y."/>
            <person name="Takiguchi S."/>
            <person name="Watanabe S."/>
            <person name="Yosida M."/>
            <person name="Hotuta T."/>
            <person name="Kusano J."/>
            <person name="Kanehori K."/>
            <person name="Takahashi-Fujii A."/>
            <person name="Hara H."/>
            <person name="Tanase T.-O."/>
            <person name="Nomura Y."/>
            <person name="Togiya S."/>
            <person name="Komai F."/>
            <person name="Hara R."/>
            <person name="Takeuchi K."/>
            <person name="Arita M."/>
            <person name="Imose N."/>
            <person name="Musashino K."/>
            <person name="Yuuki H."/>
            <person name="Oshima A."/>
            <person name="Sasaki N."/>
            <person name="Aotsuka S."/>
            <person name="Yoshikawa Y."/>
            <person name="Matsunawa H."/>
            <person name="Ichihara T."/>
            <person name="Shiohata N."/>
            <person name="Sano S."/>
            <person name="Moriya S."/>
            <person name="Momiyama H."/>
            <person name="Satoh N."/>
            <person name="Takami S."/>
            <person name="Terashima Y."/>
            <person name="Suzuki O."/>
            <person name="Nakagawa S."/>
            <person name="Senoh A."/>
            <person name="Mizoguchi H."/>
            <person name="Goto Y."/>
            <person name="Shimizu F."/>
            <person name="Wakebe H."/>
            <person name="Hishigaki H."/>
            <person name="Watanabe T."/>
            <person name="Sugiyama A."/>
            <person name="Takemoto M."/>
            <person name="Kawakami B."/>
            <person name="Yamazaki M."/>
            <person name="Watanabe K."/>
            <person name="Kumagai A."/>
            <person name="Itakura S."/>
            <person name="Fukuzumi Y."/>
            <person name="Fujimori Y."/>
            <person name="Komiyama M."/>
            <person name="Tashiro H."/>
            <person name="Tanigami A."/>
            <person name="Fujiwara T."/>
            <person name="Ono T."/>
            <person name="Yamada K."/>
            <person name="Fujii Y."/>
            <person name="Ozaki K."/>
            <person name="Hirao M."/>
            <person name="Ohmori Y."/>
            <person name="Kawabata A."/>
            <person name="Hikiji T."/>
            <person name="Kobatake N."/>
            <person name="Inagaki H."/>
            <person name="Ikema Y."/>
            <person name="Okamoto S."/>
            <person name="Okitani R."/>
            <person name="Kawakami T."/>
            <person name="Noguchi S."/>
            <person name="Itoh T."/>
            <person name="Shigeta K."/>
            <person name="Senba T."/>
            <person name="Matsumura K."/>
            <person name="Nakajima Y."/>
            <person name="Mizuno T."/>
            <person name="Morinaga M."/>
            <person name="Sasaki M."/>
            <person name="Togashi T."/>
            <person name="Oyama M."/>
            <person name="Hata H."/>
            <person name="Watanabe M."/>
            <person name="Komatsu T."/>
            <person name="Mizushima-Sugano J."/>
            <person name="Satoh T."/>
            <person name="Shirai Y."/>
            <person name="Takahashi Y."/>
            <person name="Nakagawa K."/>
            <person name="Okumura K."/>
            <person name="Nagase T."/>
            <person name="Nomura N."/>
            <person name="Kikuchi H."/>
            <person name="Masuho Y."/>
            <person name="Yamashita R."/>
            <person name="Nakai K."/>
            <person name="Yada T."/>
            <person name="Nakamura Y."/>
            <person name="Ohara O."/>
            <person name="Isogai T."/>
            <person name="Sugano S."/>
        </authorList>
    </citation>
    <scope>NUCLEOTIDE SEQUENCE [LARGE SCALE MRNA] (ISOFORMS 2; 4 AND 5)</scope>
    <source>
        <tissue>Embryo</tissue>
        <tissue>Small intestine</tissue>
    </source>
</reference>
<reference key="2">
    <citation type="journal article" date="2004" name="Nature">
        <title>The sequence and analysis of duplication-rich human chromosome 16.</title>
        <authorList>
            <person name="Martin J."/>
            <person name="Han C."/>
            <person name="Gordon L.A."/>
            <person name="Terry A."/>
            <person name="Prabhakar S."/>
            <person name="She X."/>
            <person name="Xie G."/>
            <person name="Hellsten U."/>
            <person name="Chan Y.M."/>
            <person name="Altherr M."/>
            <person name="Couronne O."/>
            <person name="Aerts A."/>
            <person name="Bajorek E."/>
            <person name="Black S."/>
            <person name="Blumer H."/>
            <person name="Branscomb E."/>
            <person name="Brown N.C."/>
            <person name="Bruno W.J."/>
            <person name="Buckingham J.M."/>
            <person name="Callen D.F."/>
            <person name="Campbell C.S."/>
            <person name="Campbell M.L."/>
            <person name="Campbell E.W."/>
            <person name="Caoile C."/>
            <person name="Challacombe J.F."/>
            <person name="Chasteen L.A."/>
            <person name="Chertkov O."/>
            <person name="Chi H.C."/>
            <person name="Christensen M."/>
            <person name="Clark L.M."/>
            <person name="Cohn J.D."/>
            <person name="Denys M."/>
            <person name="Detter J.C."/>
            <person name="Dickson M."/>
            <person name="Dimitrijevic-Bussod M."/>
            <person name="Escobar J."/>
            <person name="Fawcett J.J."/>
            <person name="Flowers D."/>
            <person name="Fotopulos D."/>
            <person name="Glavina T."/>
            <person name="Gomez M."/>
            <person name="Gonzales E."/>
            <person name="Goodstein D."/>
            <person name="Goodwin L.A."/>
            <person name="Grady D.L."/>
            <person name="Grigoriev I."/>
            <person name="Groza M."/>
            <person name="Hammon N."/>
            <person name="Hawkins T."/>
            <person name="Haydu L."/>
            <person name="Hildebrand C.E."/>
            <person name="Huang W."/>
            <person name="Israni S."/>
            <person name="Jett J."/>
            <person name="Jewett P.B."/>
            <person name="Kadner K."/>
            <person name="Kimball H."/>
            <person name="Kobayashi A."/>
            <person name="Krawczyk M.-C."/>
            <person name="Leyba T."/>
            <person name="Longmire J.L."/>
            <person name="Lopez F."/>
            <person name="Lou Y."/>
            <person name="Lowry S."/>
            <person name="Ludeman T."/>
            <person name="Manohar C.F."/>
            <person name="Mark G.A."/>
            <person name="McMurray K.L."/>
            <person name="Meincke L.J."/>
            <person name="Morgan J."/>
            <person name="Moyzis R.K."/>
            <person name="Mundt M.O."/>
            <person name="Munk A.C."/>
            <person name="Nandkeshwar R.D."/>
            <person name="Pitluck S."/>
            <person name="Pollard M."/>
            <person name="Predki P."/>
            <person name="Parson-Quintana B."/>
            <person name="Ramirez L."/>
            <person name="Rash S."/>
            <person name="Retterer J."/>
            <person name="Ricke D.O."/>
            <person name="Robinson D.L."/>
            <person name="Rodriguez A."/>
            <person name="Salamov A."/>
            <person name="Saunders E.H."/>
            <person name="Scott D."/>
            <person name="Shough T."/>
            <person name="Stallings R.L."/>
            <person name="Stalvey M."/>
            <person name="Sutherland R.D."/>
            <person name="Tapia R."/>
            <person name="Tesmer J.G."/>
            <person name="Thayer N."/>
            <person name="Thompson L.S."/>
            <person name="Tice H."/>
            <person name="Torney D.C."/>
            <person name="Tran-Gyamfi M."/>
            <person name="Tsai M."/>
            <person name="Ulanovsky L.E."/>
            <person name="Ustaszewska A."/>
            <person name="Vo N."/>
            <person name="White P.S."/>
            <person name="Williams A.L."/>
            <person name="Wills P.L."/>
            <person name="Wu J.-R."/>
            <person name="Wu K."/>
            <person name="Yang J."/>
            <person name="DeJong P."/>
            <person name="Bruce D."/>
            <person name="Doggett N.A."/>
            <person name="Deaven L."/>
            <person name="Schmutz J."/>
            <person name="Grimwood J."/>
            <person name="Richardson P."/>
            <person name="Rokhsar D.S."/>
            <person name="Eichler E.E."/>
            <person name="Gilna P."/>
            <person name="Lucas S.M."/>
            <person name="Myers R.M."/>
            <person name="Rubin E.M."/>
            <person name="Pennacchio L.A."/>
        </authorList>
    </citation>
    <scope>NUCLEOTIDE SEQUENCE [LARGE SCALE GENOMIC DNA]</scope>
</reference>
<reference key="3">
    <citation type="journal article" date="1999" name="J. Biol. Chem.">
        <title>The topoisomerase-related function gene TRF4 affects cellular sensitivity to the antitumor agent camptothecin.</title>
        <authorList>
            <person name="Walowsky C."/>
            <person name="Fitzhugh D.J."/>
            <person name="Castano I.B."/>
            <person name="Ju J.Y."/>
            <person name="Levin N.A."/>
            <person name="Christman M.F."/>
        </authorList>
    </citation>
    <scope>NUCLEOTIDE SEQUENCE [MRNA] OF 209-538 (ISOFORM 3)</scope>
    <scope>IDENTIFICATION</scope>
</reference>
<reference key="4">
    <citation type="journal article" date="2007" name="BMC Genomics">
        <title>The full-ORF clone resource of the German cDNA consortium.</title>
        <authorList>
            <person name="Bechtel S."/>
            <person name="Rosenfelder H."/>
            <person name="Duda A."/>
            <person name="Schmidt C.P."/>
            <person name="Ernst U."/>
            <person name="Wellenreuther R."/>
            <person name="Mehrle A."/>
            <person name="Schuster C."/>
            <person name="Bahr A."/>
            <person name="Bloecker H."/>
            <person name="Heubner D."/>
            <person name="Hoerlein A."/>
            <person name="Michel G."/>
            <person name="Wedler H."/>
            <person name="Koehrer K."/>
            <person name="Ottenwaelder B."/>
            <person name="Poustka A."/>
            <person name="Wiemann S."/>
            <person name="Schupp I."/>
        </authorList>
    </citation>
    <scope>NUCLEOTIDE SEQUENCE [LARGE SCALE MRNA] OF 163-572 (ISOFORM 1)</scope>
    <source>
        <tissue>Testis</tissue>
    </source>
</reference>
<reference key="5">
    <citation type="journal article" date="2008" name="Genes Dev.">
        <title>Degradation of histone mRNA requires oligouridylation followed by decapping and simultaneous degradation of the mRNA both 5' to 3' and 3' to 5'.</title>
        <authorList>
            <person name="Mullen T.E."/>
            <person name="Marzluff W.F."/>
        </authorList>
    </citation>
    <scope>FUNCTION IN HISTONE MRNA DEGRADATION ACTIVITY</scope>
    <scope>SUBCELLULAR LOCATION</scope>
</reference>
<reference key="6">
    <citation type="journal article" date="2009" name="Sci. Signal.">
        <title>Quantitative phosphoproteomic analysis of T cell receptor signaling reveals system-wide modulation of protein-protein interactions.</title>
        <authorList>
            <person name="Mayya V."/>
            <person name="Lundgren D.H."/>
            <person name="Hwang S.-I."/>
            <person name="Rezaul K."/>
            <person name="Wu L."/>
            <person name="Eng J.K."/>
            <person name="Rodionov V."/>
            <person name="Han D.K."/>
        </authorList>
    </citation>
    <scope>PHOSPHORYLATION [LARGE SCALE ANALYSIS] AT SER-484</scope>
    <scope>IDENTIFICATION BY MASS SPECTROMETRY [LARGE SCALE ANALYSIS]</scope>
    <source>
        <tissue>Leukemic T-cell</tissue>
    </source>
</reference>
<reference key="7">
    <citation type="journal article" date="2011" name="Mol. Cell">
        <title>Interaction profiling identifies the human nuclear exosome targeting complex.</title>
        <authorList>
            <person name="Lubas M."/>
            <person name="Christensen M.S."/>
            <person name="Kristiansen M.S."/>
            <person name="Domanski M."/>
            <person name="Falkenby L.G."/>
            <person name="Lykke-Andersen S."/>
            <person name="Andersen J.S."/>
            <person name="Dziembowski A."/>
            <person name="Jensen T.H."/>
        </authorList>
    </citation>
    <scope>IDENTIFICATION IN A TRAMP-LIKE COMPLEX</scope>
    <scope>FUNCTION</scope>
    <scope>SUBCELLULAR LOCATION</scope>
</reference>
<reference key="8">
    <citation type="journal article" date="2011" name="RNA">
        <title>PAPD5, a noncanonical poly(A) polymerase with an unusual RNA-binding motif.</title>
        <authorList>
            <person name="Rammelt C."/>
            <person name="Bilen B."/>
            <person name="Zavolan M."/>
            <person name="Keller W."/>
        </authorList>
    </citation>
    <scope>FUNCTION</scope>
    <scope>CATALYTIC ACTIVITY</scope>
    <scope>SUBCELLULAR LOCATION</scope>
</reference>
<reference key="9">
    <citation type="journal article" date="2012" name="Biochem. Soc. Trans.">
        <title>Comparison of the yeast and human nuclear exosome complexes.</title>
        <authorList>
            <person name="Sloan K.E."/>
            <person name="Schneider C."/>
            <person name="Watkins N.J."/>
        </authorList>
    </citation>
    <scope>REVIEW ON RNA EXOSOMES</scope>
</reference>
<reference key="10">
    <citation type="journal article" date="2012" name="RNA">
        <title>Maturation of mammalian H/ACA box snoRNAs: PAPD5-dependent adenylation and PARN-dependent trimming.</title>
        <authorList>
            <person name="Berndt H."/>
            <person name="Harnisch C."/>
            <person name="Rammelt C."/>
            <person name="Stoehr N."/>
            <person name="Zirkel A."/>
            <person name="Dohm J.C."/>
            <person name="Himmelbauer H."/>
            <person name="Tavanez J.P."/>
            <person name="Huettelmaier S."/>
            <person name="Wahle E."/>
        </authorList>
    </citation>
    <scope>FUNCTION</scope>
</reference>
<reference key="11">
    <citation type="journal article" date="2013" name="Biochem. Biophys. Res. Commun.">
        <title>Molecular cloning and characterization of a novel isoform of the non-canonical poly(A) polymerase PAPD7.</title>
        <authorList>
            <person name="Ogami K."/>
            <person name="Cho R."/>
            <person name="Hoshino S."/>
        </authorList>
    </citation>
    <scope>SUBCELLULAR LOCATION</scope>
</reference>
<reference key="12">
    <citation type="journal article" date="2013" name="J. Proteome Res.">
        <title>Toward a comprehensive characterization of a human cancer cell phosphoproteome.</title>
        <authorList>
            <person name="Zhou H."/>
            <person name="Di Palma S."/>
            <person name="Preisinger C."/>
            <person name="Peng M."/>
            <person name="Polat A.N."/>
            <person name="Heck A.J."/>
            <person name="Mohammed S."/>
        </authorList>
    </citation>
    <scope>PHOSPHORYLATION [LARGE SCALE ANALYSIS] AT SER-484</scope>
    <scope>IDENTIFICATION BY MASS SPECTROMETRY [LARGE SCALE ANALYSIS]</scope>
    <source>
        <tissue>Cervix carcinoma</tissue>
        <tissue>Erythroleukemia</tissue>
    </source>
</reference>
<reference key="13">
    <citation type="journal article" date="2014" name="Proc. Natl. Acad. Sci. U.S.A.">
        <title>PAPD5-mediated 3' adenylation and subsequent degradation of miR-21 is disrupted in proliferative disease.</title>
        <authorList>
            <person name="Boele J."/>
            <person name="Persson H."/>
            <person name="Shin J.W."/>
            <person name="Ishizu Y."/>
            <person name="Newie I.S."/>
            <person name="Soekilde R."/>
            <person name="Hawkins S.M."/>
            <person name="Coarfa C."/>
            <person name="Ikeda K."/>
            <person name="Takayama K."/>
            <person name="Horie-Inoue K."/>
            <person name="Ando Y."/>
            <person name="Burroughs A.M."/>
            <person name="Sasaki C."/>
            <person name="Suzuki C."/>
            <person name="Sakai M."/>
            <person name="Aoki S."/>
            <person name="Ogawa A."/>
            <person name="Hasegawa A."/>
            <person name="Lizio M."/>
            <person name="Kaida K."/>
            <person name="Teusink B."/>
            <person name="Carninci P."/>
            <person name="Suzuki H."/>
            <person name="Inoue S."/>
            <person name="Gunaratne P.H."/>
            <person name="Rovira C."/>
            <person name="Hayashizaki Y."/>
            <person name="de Hoon M.J."/>
        </authorList>
    </citation>
    <scope>FUNCTION</scope>
</reference>
<reference key="14">
    <citation type="journal article" date="2017" name="Nat. Struct. Mol. Biol.">
        <title>Site-specific mapping of the human SUMO proteome reveals co-modification with phosphorylation.</title>
        <authorList>
            <person name="Hendriks I.A."/>
            <person name="Lyon D."/>
            <person name="Young C."/>
            <person name="Jensen L.J."/>
            <person name="Vertegaal A.C."/>
            <person name="Nielsen M.L."/>
        </authorList>
    </citation>
    <scope>SUMOYLATION [LARGE SCALE ANALYSIS] AT LYS-470; LYS-497; LYS-512 AND LYS-526</scope>
    <scope>SUMOYLATION [LARGE SCALE ANALYSIS] AT LYS-151 (ISOFORM 5)</scope>
    <scope>IDENTIFICATION BY MASS SPECTROMETRY [LARGE SCALE ANALYSIS]</scope>
</reference>
<reference key="15">
    <citation type="journal article" date="2017" name="Nucleic Acids Res.">
        <title>Essential role for non-canonical poly(A) polymerase GLD4 in cytoplasmic polyadenylation and carbohydrate metabolism.</title>
        <authorList>
            <person name="Shin J."/>
            <person name="Paek K.Y."/>
            <person name="Ivshina M."/>
            <person name="Stackpole E.E."/>
            <person name="Richter J.D."/>
        </authorList>
    </citation>
    <scope>FUNCTION</scope>
    <scope>SUBCELLULAR LOCATION</scope>
    <scope>INTERACTION WITH CPEB1</scope>
</reference>
<reference key="16">
    <citation type="journal article" date="2018" name="Science">
        <title>Mixed tailing by TENT4A and TENT4B shields mRNA from rapid deadenylation.</title>
        <authorList>
            <person name="Lim J."/>
            <person name="Kim D."/>
            <person name="Lee Y.S."/>
            <person name="Ha M."/>
            <person name="Lee M."/>
            <person name="Yeo J."/>
            <person name="Chang H."/>
            <person name="Song J."/>
            <person name="Ahn K."/>
            <person name="Kim V.N."/>
        </authorList>
    </citation>
    <scope>FUNCTION</scope>
</reference>
<gene>
    <name evidence="16" type="primary">TENT4B</name>
    <name evidence="14" type="synonym">GLD4</name>
    <name evidence="16" type="synonym">PAPD5</name>
    <name evidence="13" type="synonym">TRF4-2</name>
    <name type="synonym">TUT3</name>
</gene>
<protein>
    <recommendedName>
        <fullName evidence="15">Terminal nucleotidyltransferase 4B</fullName>
    </recommendedName>
    <alternativeName>
        <fullName evidence="15">Non-canonical poly(A) RNA polymerase PAPD5</fullName>
        <ecNumber evidence="4">2.7.7.19</ecNumber>
    </alternativeName>
    <alternativeName>
        <fullName>PAP-associated domain-containing protein 5</fullName>
    </alternativeName>
    <alternativeName>
        <fullName evidence="15">Terminal guanylyltransferase</fullName>
        <ecNumber evidence="10">2.7.7.-</ecNumber>
    </alternativeName>
    <alternativeName>
        <fullName>Terminal uridylyltransferase 3</fullName>
        <shortName>TUTase 3</shortName>
    </alternativeName>
    <alternativeName>
        <fullName>Topoisomerase-related function protein 4-2</fullName>
        <shortName evidence="13">TRF4-2</shortName>
    </alternativeName>
</protein>
<comment type="function">
    <text evidence="3 4 5 6 8 9 10">Terminal nucleotidyltransferase that catalyzes preferentially the transfer of ATP and GTP on RNA 3' poly(A) tail creating a heterogeneous 3' poly(A) tail leading to mRNAs stabilization by protecting mRNAs from active deadenylation (PubMed:21788334, PubMed:30026317). Also functions as a catalytic subunit of a TRAMP-like complex which has a poly(A) RNA polymerase activity and is involved in a post-transcriptional quality control mechanism. Polyadenylation with short oligo(A) tails is required for the degradative activity of the exosome on several of its nuclear RNA substrates. Doesn't need a cofactor for polyadenylation activity (in vitro) (PubMed:21788334, PubMed:21855801). Required for cytoplasmic polyadenylation of mRNAs involved in carbohydrate metabolism, including the glucose transporter SLC2A1/GLUT1 (PubMed:28383716). Plays a role in replication-dependent histone mRNA degradation, probably through terminal uridylation of mature histone mRNAs. May play a role in sister chromatid cohesion (PubMed:18172165). Mediates 3' adenylation of the microRNA MIR21 followed by its 3'-to-5' trimming by the exoribonuclease PARN leading to degradation (PubMed:25049417). Mediates 3' adenylation of H/ACA box snoRNAs (small nucleolar RNAs) followed by its 3'-to-5' trimming by the exoribonuclease PARN which enhances snoRNA stability and maturation (PubMed:22442037).</text>
</comment>
<comment type="catalytic activity">
    <reaction evidence="4">
        <text>RNA(n) + ATP = RNA(n)-3'-adenine ribonucleotide + diphosphate</text>
        <dbReference type="Rhea" id="RHEA:11332"/>
        <dbReference type="Rhea" id="RHEA-COMP:14527"/>
        <dbReference type="Rhea" id="RHEA-COMP:17347"/>
        <dbReference type="ChEBI" id="CHEBI:30616"/>
        <dbReference type="ChEBI" id="CHEBI:33019"/>
        <dbReference type="ChEBI" id="CHEBI:140395"/>
        <dbReference type="ChEBI" id="CHEBI:173115"/>
        <dbReference type="EC" id="2.7.7.19"/>
    </reaction>
</comment>
<comment type="cofactor">
    <cofactor evidence="1">
        <name>Mg(2+)</name>
        <dbReference type="ChEBI" id="CHEBI:18420"/>
    </cofactor>
    <cofactor evidence="1">
        <name>Mn(2+)</name>
        <dbReference type="ChEBI" id="CHEBI:29035"/>
    </cofactor>
</comment>
<comment type="subunit">
    <text evidence="5 9">Component of a nucleolar TRAMP-like complex, an ATP-dependent exosome regulatory complex consisting of a helicase (MTREX), an oligadenylate polymerase (TENT4B or TENT4A), and a substrate specific RNA-binding factor (ZCCHC7 or ZCCHC8). Several TRAMP-like complexes exist with specific compositions and are associated with nuclear, or nucleolar RNA exosomes (PubMed:21855801). Interacts with CPEB1; the interaction is required for TENT4B-mediated translational control (PubMed:28383716).</text>
</comment>
<comment type="subcellular location">
    <subcellularLocation>
        <location evidence="3 4">Nucleus</location>
    </subcellularLocation>
    <subcellularLocation>
        <location evidence="5 7">Nucleus</location>
        <location evidence="5 7">Nucleolus</location>
    </subcellularLocation>
    <subcellularLocation>
        <location evidence="3 9">Cytoplasm</location>
    </subcellularLocation>
    <text>Predominantly expressed in the cytoplasm (PubMed:18172165).</text>
</comment>
<comment type="alternative products">
    <event type="alternative splicing"/>
    <isoform>
        <id>Q8NDF8-1</id>
        <name>1</name>
        <sequence type="displayed"/>
    </isoform>
    <isoform>
        <id>Q8NDF8-2</id>
        <name>2</name>
        <sequence type="described" ref="VSP_012734 VSP_012736"/>
    </isoform>
    <isoform>
        <id>Q8NDF8-3</id>
        <name>3</name>
        <sequence type="described" ref="VSP_012735 VSP_012737"/>
    </isoform>
    <isoform>
        <id>Q8NDF8-4</id>
        <name>4</name>
        <sequence type="described" ref="VSP_012732 VSP_012733"/>
    </isoform>
    <isoform>
        <id>Q8NDF8-5</id>
        <name>5</name>
        <sequence type="described" ref="VSP_046989 VSP_046990 VSP_012735"/>
    </isoform>
</comment>
<comment type="similarity">
    <text evidence="15">Belongs to the DNA polymerase type-B-like family.</text>
</comment>
<comment type="caution">
    <text evidence="15">Was originally thought to have DNA polymerase activity.</text>
</comment>
<comment type="sequence caution" evidence="15">
    <conflict type="erroneous initiation">
        <sequence resource="EMBL-CDS" id="AAD45199"/>
    </conflict>
    <text>Extended N-terminus.</text>
</comment>
<comment type="sequence caution" evidence="15">
    <conflict type="erroneous initiation">
        <sequence resource="EMBL-CDS" id="BAA91518"/>
    </conflict>
    <text>Truncated N-terminus.</text>
</comment>
<evidence type="ECO:0000250" key="1">
    <source>
        <dbReference type="UniProtKB" id="O13833"/>
    </source>
</evidence>
<evidence type="ECO:0000256" key="2">
    <source>
        <dbReference type="SAM" id="MobiDB-lite"/>
    </source>
</evidence>
<evidence type="ECO:0000269" key="3">
    <source>
    </source>
</evidence>
<evidence type="ECO:0000269" key="4">
    <source>
    </source>
</evidence>
<evidence type="ECO:0000269" key="5">
    <source>
    </source>
</evidence>
<evidence type="ECO:0000269" key="6">
    <source>
    </source>
</evidence>
<evidence type="ECO:0000269" key="7">
    <source>
    </source>
</evidence>
<evidence type="ECO:0000269" key="8">
    <source>
    </source>
</evidence>
<evidence type="ECO:0000269" key="9">
    <source>
    </source>
</evidence>
<evidence type="ECO:0000269" key="10">
    <source>
    </source>
</evidence>
<evidence type="ECO:0000303" key="11">
    <source>
    </source>
</evidence>
<evidence type="ECO:0000303" key="12">
    <source>
    </source>
</evidence>
<evidence type="ECO:0000303" key="13">
    <source>
    </source>
</evidence>
<evidence type="ECO:0000303" key="14">
    <source>
    </source>
</evidence>
<evidence type="ECO:0000305" key="15"/>
<evidence type="ECO:0000312" key="16">
    <source>
        <dbReference type="HGNC" id="HGNC:30758"/>
    </source>
</evidence>
<evidence type="ECO:0007744" key="17">
    <source>
    </source>
</evidence>
<evidence type="ECO:0007744" key="18">
    <source>
    </source>
</evidence>
<evidence type="ECO:0007744" key="19">
    <source>
    </source>
</evidence>
<keyword id="KW-0025">Alternative splicing</keyword>
<keyword id="KW-0067">ATP-binding</keyword>
<keyword id="KW-0131">Cell cycle</keyword>
<keyword id="KW-0132">Cell division</keyword>
<keyword id="KW-0963">Cytoplasm</keyword>
<keyword id="KW-1017">Isopeptide bond</keyword>
<keyword id="KW-0460">Magnesium</keyword>
<keyword id="KW-0464">Manganese</keyword>
<keyword id="KW-0479">Metal-binding</keyword>
<keyword id="KW-0498">Mitosis</keyword>
<keyword id="KW-0507">mRNA processing</keyword>
<keyword id="KW-0547">Nucleotide-binding</keyword>
<keyword id="KW-0548">Nucleotidyltransferase</keyword>
<keyword id="KW-0539">Nucleus</keyword>
<keyword id="KW-0597">Phosphoprotein</keyword>
<keyword id="KW-1267">Proteomics identification</keyword>
<keyword id="KW-1185">Reference proteome</keyword>
<keyword id="KW-0694">RNA-binding</keyword>
<keyword id="KW-0698">rRNA processing</keyword>
<keyword id="KW-0808">Transferase</keyword>
<keyword id="KW-0832">Ubl conjugation</keyword>
<organism>
    <name type="scientific">Homo sapiens</name>
    <name type="common">Human</name>
    <dbReference type="NCBI Taxonomy" id="9606"/>
    <lineage>
        <taxon>Eukaryota</taxon>
        <taxon>Metazoa</taxon>
        <taxon>Chordata</taxon>
        <taxon>Craniata</taxon>
        <taxon>Vertebrata</taxon>
        <taxon>Euteleostomi</taxon>
        <taxon>Mammalia</taxon>
        <taxon>Eutheria</taxon>
        <taxon>Euarchontoglires</taxon>
        <taxon>Primates</taxon>
        <taxon>Haplorrhini</taxon>
        <taxon>Catarrhini</taxon>
        <taxon>Hominidae</taxon>
        <taxon>Homo</taxon>
    </lineage>
</organism>
<proteinExistence type="evidence at protein level"/>
<sequence>MYRSGERLLGSHALPAEQRDFLPLETTNNNNNHHQPGAWARRAGSSASSPPSASSSPHPSAAVPAADPADSASGSSNKRKRDNKASGGRAAGGGRADGGGVVYSGTPWKRRNYNQGVVGLHEEISDFYEYMSPRPEEEKMRMEVVNRIESVIKELWPSADVQIFGSFKTGLYLPTSDIDLVVFGKWENLPLWTLEEALRKHKVADEDSVKVLDKATVPIIKLTDSFTEVKVDISFNVQNGVRAADLIKDFTKKYPVLPYLVLVLKQFLLQRDLNEVFTGGIGSYSLFLMAVSFLQLHPREDACIPNTNYGVLLIEFFELYGRHFNYLKTGIRIKDGGSYVAKDEVQKNMLDGYRPSMLYIEDPLQPGNDVGRSSYGAMQVKQAFDYAYVVLSHAVSPIAKYYPNNETESILGRIIRVTDEVATYRDWISKQWGLKNRPEPSCNGPVSSSSATQSSSSDVDSDATPCKTPKQLLCRPSTGNRVGSQDVSLESSQAVGKMQSTQTTNTSNSTNKSQHGSARLFRSSSKGFQGTTQTSHGSLMTNKQHQGKSNNQYYHGKKRKHKRDAPLSDLCR</sequence>
<feature type="chain" id="PRO_0000120310" description="Terminal nucleotidyltransferase 4B">
    <location>
        <begin position="1"/>
        <end position="572"/>
    </location>
</feature>
<feature type="domain" description="PAP-associated">
    <location>
        <begin position="308"/>
        <end position="368"/>
    </location>
</feature>
<feature type="region of interest" description="Disordered" evidence="2">
    <location>
        <begin position="1"/>
        <end position="105"/>
    </location>
</feature>
<feature type="region of interest" description="Disordered" evidence="2">
    <location>
        <begin position="435"/>
        <end position="572"/>
    </location>
</feature>
<feature type="short sequence motif" description="Basic, involved in binding of the RNA primer" evidence="3">
    <location>
        <begin position="557"/>
        <end position="563"/>
    </location>
</feature>
<feature type="compositionally biased region" description="Polar residues" evidence="2">
    <location>
        <begin position="25"/>
        <end position="34"/>
    </location>
</feature>
<feature type="compositionally biased region" description="Low complexity" evidence="2">
    <location>
        <begin position="36"/>
        <end position="76"/>
    </location>
</feature>
<feature type="compositionally biased region" description="Gly residues" evidence="2">
    <location>
        <begin position="89"/>
        <end position="102"/>
    </location>
</feature>
<feature type="compositionally biased region" description="Low complexity" evidence="2">
    <location>
        <begin position="446"/>
        <end position="464"/>
    </location>
</feature>
<feature type="compositionally biased region" description="Polar residues" evidence="2">
    <location>
        <begin position="477"/>
        <end position="494"/>
    </location>
</feature>
<feature type="compositionally biased region" description="Low complexity" evidence="2">
    <location>
        <begin position="499"/>
        <end position="514"/>
    </location>
</feature>
<feature type="compositionally biased region" description="Polar residues" evidence="2">
    <location>
        <begin position="522"/>
        <end position="553"/>
    </location>
</feature>
<feature type="binding site" evidence="1">
    <location>
        <position position="177"/>
    </location>
    <ligand>
        <name>Mg(2+)</name>
        <dbReference type="ChEBI" id="CHEBI:18420"/>
        <note>catalytic</note>
    </ligand>
</feature>
<feature type="binding site" evidence="1">
    <location>
        <position position="179"/>
    </location>
    <ligand>
        <name>Mg(2+)</name>
        <dbReference type="ChEBI" id="CHEBI:18420"/>
        <note>catalytic</note>
    </ligand>
</feature>
<feature type="binding site" evidence="1">
    <location>
        <position position="240"/>
    </location>
    <ligand>
        <name>ATP</name>
        <dbReference type="ChEBI" id="CHEBI:30616"/>
    </ligand>
</feature>
<feature type="binding site" evidence="1">
    <location>
        <position position="265"/>
    </location>
    <ligand>
        <name>ATP</name>
        <dbReference type="ChEBI" id="CHEBI:30616"/>
    </ligand>
</feature>
<feature type="binding site" evidence="1">
    <location>
        <position position="283"/>
    </location>
    <ligand>
        <name>ATP</name>
        <dbReference type="ChEBI" id="CHEBI:30616"/>
    </ligand>
</feature>
<feature type="binding site" evidence="1">
    <location>
        <position position="284"/>
    </location>
    <ligand>
        <name>ATP</name>
        <dbReference type="ChEBI" id="CHEBI:30616"/>
    </ligand>
</feature>
<feature type="binding site" evidence="1">
    <location>
        <position position="368"/>
    </location>
    <ligand>
        <name>ATP</name>
        <dbReference type="ChEBI" id="CHEBI:30616"/>
    </ligand>
</feature>
<feature type="binding site" evidence="1">
    <location>
        <position position="372"/>
    </location>
    <ligand>
        <name>ATP</name>
        <dbReference type="ChEBI" id="CHEBI:30616"/>
    </ligand>
</feature>
<feature type="modified residue" description="Phosphoserine" evidence="17 18">
    <location>
        <position position="484"/>
    </location>
</feature>
<feature type="cross-link" description="Glycyl lysine isopeptide (Lys-Gly) (interchain with G-Cter in SUMO2)" evidence="19">
    <location>
        <position position="470"/>
    </location>
</feature>
<feature type="cross-link" description="Glycyl lysine isopeptide (Lys-Gly) (interchain with G-Cter in SUMO2)" evidence="19">
    <location>
        <position position="497"/>
    </location>
</feature>
<feature type="cross-link" description="Glycyl lysine isopeptide (Lys-Gly) (interchain with G-Cter in SUMO2)" evidence="19">
    <location>
        <position position="512"/>
    </location>
</feature>
<feature type="cross-link" description="Glycyl lysine isopeptide (Lys-Gly) (interchain with G-Cter in SUMO2)" evidence="19">
    <location>
        <position position="526"/>
    </location>
</feature>
<feature type="splice variant" id="VSP_046989" description="In isoform 5." evidence="12">
    <original>M</original>
    <variation>MRPRPRSAPGKPRRRSRARLRSSRTPSGGASGGGGSSSSSSTATGGSGSSTGSPGGAASAPAPAPAGM</variation>
    <location>
        <position position="1"/>
    </location>
</feature>
<feature type="splice variant" id="VSP_046990" description="In isoform 5." evidence="12">
    <original>A</original>
    <variation>ASTYGLNYSLLQP</variation>
    <location>
        <position position="85"/>
    </location>
</feature>
<feature type="splice variant" id="VSP_012732" description="In isoform 4." evidence="12">
    <original>NDV</original>
    <variation>IEI</variation>
    <location>
        <begin position="368"/>
        <end position="370"/>
    </location>
</feature>
<feature type="splice variant" id="VSP_012733" description="In isoform 4." evidence="12">
    <location>
        <begin position="371"/>
        <end position="572"/>
    </location>
</feature>
<feature type="splice variant" id="VSP_012735" description="In isoform 3 and isoform 5." evidence="11 12">
    <original>G</original>
    <variation>GNGVTLIVDTQQLDKCNNNLSEENEALGKCRSKTSESLSKHSSNSSSG</variation>
    <location>
        <position position="444"/>
    </location>
</feature>
<feature type="splice variant" id="VSP_012734" description="In isoform 2." evidence="12">
    <original>PVSSSSATQSSSSDVDSDATP</original>
    <variation>NETLHQVQCRPLLPHSPALVT</variation>
    <location>
        <begin position="445"/>
        <end position="465"/>
    </location>
</feature>
<feature type="splice variant" id="VSP_012736" description="In isoform 2." evidence="12">
    <location>
        <begin position="466"/>
        <end position="572"/>
    </location>
</feature>
<feature type="splice variant" id="VSP_012737" description="In isoform 3." evidence="11">
    <location>
        <begin position="539"/>
        <end position="572"/>
    </location>
</feature>
<feature type="cross-link" description="Glycyl lysine isopeptide (Lys-Gly) (interchain with G-Cter in SUMO2)" evidence="15">
    <location sequence="Q8NDF8-5">
        <position position="151"/>
    </location>
</feature>
<dbReference type="EC" id="2.7.7.19" evidence="4"/>
<dbReference type="EC" id="2.7.7.-" evidence="10"/>
<dbReference type="EMBL" id="AK001141">
    <property type="protein sequence ID" value="BAA91518.1"/>
    <property type="status" value="ALT_INIT"/>
    <property type="molecule type" value="mRNA"/>
</dbReference>
<dbReference type="EMBL" id="AK097589">
    <property type="status" value="NOT_ANNOTATED_CDS"/>
    <property type="molecule type" value="mRNA"/>
</dbReference>
<dbReference type="EMBL" id="AK300918">
    <property type="protein sequence ID" value="BAG62550.1"/>
    <property type="molecule type" value="mRNA"/>
</dbReference>
<dbReference type="EMBL" id="AC007597">
    <property type="status" value="NOT_ANNOTATED_CDS"/>
    <property type="molecule type" value="Genomic_DNA"/>
</dbReference>
<dbReference type="EMBL" id="AC007610">
    <property type="status" value="NOT_ANNOTATED_CDS"/>
    <property type="molecule type" value="Genomic_DNA"/>
</dbReference>
<dbReference type="EMBL" id="AF089897">
    <property type="protein sequence ID" value="AAD45199.1"/>
    <property type="status" value="ALT_INIT"/>
    <property type="molecule type" value="mRNA"/>
</dbReference>
<dbReference type="EMBL" id="AL833922">
    <property type="protein sequence ID" value="CAD38778.1"/>
    <property type="molecule type" value="mRNA"/>
</dbReference>
<dbReference type="CCDS" id="CCDS54006.1">
    <molecule id="Q8NDF8-5"/>
</dbReference>
<dbReference type="RefSeq" id="NP_001035374.2">
    <molecule id="Q8NDF8-5"/>
    <property type="nucleotide sequence ID" value="NM_001040284.3"/>
</dbReference>
<dbReference type="RefSeq" id="NP_001035375.2">
    <property type="nucleotide sequence ID" value="NM_001040285.2"/>
</dbReference>
<dbReference type="SMR" id="Q8NDF8"/>
<dbReference type="BioGRID" id="122126">
    <property type="interactions" value="189"/>
</dbReference>
<dbReference type="ComplexPortal" id="CPX-2740">
    <property type="entry name" value="TRAMP complex, TENT4B-ZCCHC7 variant"/>
</dbReference>
<dbReference type="DIP" id="DIP-59183N"/>
<dbReference type="ELM" id="Q8NDF8"/>
<dbReference type="FunCoup" id="Q8NDF8">
    <property type="interactions" value="2113"/>
</dbReference>
<dbReference type="IntAct" id="Q8NDF8">
    <property type="interactions" value="91"/>
</dbReference>
<dbReference type="MINT" id="Q8NDF8"/>
<dbReference type="STRING" id="9606.ENSP00000396995"/>
<dbReference type="ChEMBL" id="CHEMBL4680036"/>
<dbReference type="GlyGen" id="Q8NDF8">
    <property type="glycosylation" value="1 site, 1 O-linked glycan (1 site)"/>
</dbReference>
<dbReference type="iPTMnet" id="Q8NDF8"/>
<dbReference type="PhosphoSitePlus" id="Q8NDF8"/>
<dbReference type="BioMuta" id="PAPD5"/>
<dbReference type="DMDM" id="59800139"/>
<dbReference type="jPOST" id="Q8NDF8"/>
<dbReference type="MassIVE" id="Q8NDF8"/>
<dbReference type="PeptideAtlas" id="Q8NDF8"/>
<dbReference type="ProteomicsDB" id="5240"/>
<dbReference type="ProteomicsDB" id="73020">
    <molecule id="Q8NDF8-1"/>
</dbReference>
<dbReference type="ProteomicsDB" id="73021">
    <molecule id="Q8NDF8-2"/>
</dbReference>
<dbReference type="ProteomicsDB" id="73022">
    <molecule id="Q8NDF8-3"/>
</dbReference>
<dbReference type="ProteomicsDB" id="73023">
    <molecule id="Q8NDF8-4"/>
</dbReference>
<dbReference type="Pumba" id="Q8NDF8"/>
<dbReference type="Antibodypedia" id="28218">
    <property type="antibodies" value="150 antibodies from 25 providers"/>
</dbReference>
<dbReference type="DNASU" id="64282"/>
<dbReference type="Ensembl" id="ENST00000436909.8">
    <molecule id="Q8NDF8-5"/>
    <property type="protein sequence ID" value="ENSP00000396995.3"/>
    <property type="gene ID" value="ENSG00000121274.14"/>
</dbReference>
<dbReference type="GeneID" id="64282"/>
<dbReference type="KEGG" id="hsa:64282"/>
<dbReference type="UCSC" id="uc010vgo.3">
    <molecule id="Q8NDF8-1"/>
    <property type="organism name" value="human"/>
</dbReference>
<dbReference type="AGR" id="HGNC:30758"/>
<dbReference type="CTD" id="64282"/>
<dbReference type="DisGeNET" id="64282"/>
<dbReference type="GeneCards" id="TENT4B"/>
<dbReference type="HGNC" id="HGNC:30758">
    <property type="gene designation" value="TENT4B"/>
</dbReference>
<dbReference type="HPA" id="ENSG00000121274">
    <property type="expression patterns" value="Low tissue specificity"/>
</dbReference>
<dbReference type="MIM" id="605540">
    <property type="type" value="gene"/>
</dbReference>
<dbReference type="neXtProt" id="NX_Q8NDF8"/>
<dbReference type="OpenTargets" id="ENSG00000121274"/>
<dbReference type="PharmGKB" id="PA134949693"/>
<dbReference type="VEuPathDB" id="HostDB:ENSG00000121274"/>
<dbReference type="eggNOG" id="KOG1906">
    <property type="taxonomic scope" value="Eukaryota"/>
</dbReference>
<dbReference type="GeneTree" id="ENSGT00940000158301"/>
<dbReference type="HOGENOM" id="CLU_013572_3_2_1"/>
<dbReference type="InParanoid" id="Q8NDF8"/>
<dbReference type="OrthoDB" id="273917at2759"/>
<dbReference type="PAN-GO" id="Q8NDF8">
    <property type="GO annotations" value="4 GO annotations based on evolutionary models"/>
</dbReference>
<dbReference type="PhylomeDB" id="Q8NDF8"/>
<dbReference type="TreeFam" id="TF313939"/>
<dbReference type="BRENDA" id="2.7.7.19">
    <property type="organism ID" value="2681"/>
</dbReference>
<dbReference type="PathwayCommons" id="Q8NDF8"/>
<dbReference type="SignaLink" id="Q8NDF8"/>
<dbReference type="BioGRID-ORCS" id="64282">
    <property type="hits" value="60 hits in 1157 CRISPR screens"/>
</dbReference>
<dbReference type="CD-CODE" id="91857CE7">
    <property type="entry name" value="Nucleolus"/>
</dbReference>
<dbReference type="ChiTaRS" id="PAPD5">
    <property type="organism name" value="human"/>
</dbReference>
<dbReference type="GenomeRNAi" id="64282"/>
<dbReference type="Pharos" id="Q8NDF8">
    <property type="development level" value="Tbio"/>
</dbReference>
<dbReference type="PRO" id="PR:Q8NDF8"/>
<dbReference type="Proteomes" id="UP000005640">
    <property type="component" value="Chromosome 16"/>
</dbReference>
<dbReference type="RNAct" id="Q8NDF8">
    <property type="molecule type" value="protein"/>
</dbReference>
<dbReference type="Bgee" id="ENSG00000121274">
    <property type="expression patterns" value="Expressed in ileal mucosa and 198 other cell types or tissues"/>
</dbReference>
<dbReference type="ExpressionAtlas" id="Q8NDF8">
    <property type="expression patterns" value="baseline and differential"/>
</dbReference>
<dbReference type="GO" id="GO:0005737">
    <property type="term" value="C:cytoplasm"/>
    <property type="evidence" value="ECO:0000314"/>
    <property type="project" value="UniProtKB"/>
</dbReference>
<dbReference type="GO" id="GO:0005829">
    <property type="term" value="C:cytosol"/>
    <property type="evidence" value="ECO:0000314"/>
    <property type="project" value="HPA"/>
</dbReference>
<dbReference type="GO" id="GO:0005730">
    <property type="term" value="C:nucleolus"/>
    <property type="evidence" value="ECO:0000314"/>
    <property type="project" value="HPA"/>
</dbReference>
<dbReference type="GO" id="GO:0005886">
    <property type="term" value="C:plasma membrane"/>
    <property type="evidence" value="ECO:0000314"/>
    <property type="project" value="HPA"/>
</dbReference>
<dbReference type="GO" id="GO:0031499">
    <property type="term" value="C:TRAMP complex"/>
    <property type="evidence" value="ECO:0000314"/>
    <property type="project" value="UniProtKB"/>
</dbReference>
<dbReference type="GO" id="GO:0005524">
    <property type="term" value="F:ATP binding"/>
    <property type="evidence" value="ECO:0007669"/>
    <property type="project" value="UniProtKB-KW"/>
</dbReference>
<dbReference type="GO" id="GO:0070568">
    <property type="term" value="F:guanylyltransferase activity"/>
    <property type="evidence" value="ECO:0000315"/>
    <property type="project" value="UniProtKB"/>
</dbReference>
<dbReference type="GO" id="GO:0046872">
    <property type="term" value="F:metal ion binding"/>
    <property type="evidence" value="ECO:0007669"/>
    <property type="project" value="UniProtKB-KW"/>
</dbReference>
<dbReference type="GO" id="GO:1990817">
    <property type="term" value="F:poly(A) RNA polymerase activity"/>
    <property type="evidence" value="ECO:0000314"/>
    <property type="project" value="UniProtKB"/>
</dbReference>
<dbReference type="GO" id="GO:0003723">
    <property type="term" value="F:RNA binding"/>
    <property type="evidence" value="ECO:0007005"/>
    <property type="project" value="UniProtKB"/>
</dbReference>
<dbReference type="GO" id="GO:0070034">
    <property type="term" value="F:telomerase RNA binding"/>
    <property type="evidence" value="ECO:0000353"/>
    <property type="project" value="BHF-UCL"/>
</dbReference>
<dbReference type="GO" id="GO:0033500">
    <property type="term" value="P:carbohydrate homeostasis"/>
    <property type="evidence" value="ECO:0000315"/>
    <property type="project" value="UniProtKB"/>
</dbReference>
<dbReference type="GO" id="GO:0051301">
    <property type="term" value="P:cell division"/>
    <property type="evidence" value="ECO:0007669"/>
    <property type="project" value="UniProtKB-KW"/>
</dbReference>
<dbReference type="GO" id="GO:0071044">
    <property type="term" value="P:histone mRNA catabolic process"/>
    <property type="evidence" value="ECO:0000315"/>
    <property type="project" value="UniProtKB"/>
</dbReference>
<dbReference type="GO" id="GO:0010587">
    <property type="term" value="P:miRNA catabolic process"/>
    <property type="evidence" value="ECO:0000314"/>
    <property type="project" value="UniProtKB"/>
</dbReference>
<dbReference type="GO" id="GO:0031124">
    <property type="term" value="P:mRNA 3'-end processing"/>
    <property type="evidence" value="ECO:0000314"/>
    <property type="project" value="UniProtKB"/>
</dbReference>
<dbReference type="GO" id="GO:0060212">
    <property type="term" value="P:negative regulation of nuclear-transcribed mRNA poly(A) tail shortening"/>
    <property type="evidence" value="ECO:0000315"/>
    <property type="project" value="UniProtKB"/>
</dbReference>
<dbReference type="GO" id="GO:0032211">
    <property type="term" value="P:negative regulation of telomere maintenance via telomerase"/>
    <property type="evidence" value="ECO:0000315"/>
    <property type="project" value="BHF-UCL"/>
</dbReference>
<dbReference type="GO" id="GO:0071051">
    <property type="term" value="P:poly(A)-dependent snoRNA 3'-end processing"/>
    <property type="evidence" value="ECO:0000314"/>
    <property type="project" value="UniProtKB"/>
</dbReference>
<dbReference type="GO" id="GO:0043634">
    <property type="term" value="P:polyadenylation-dependent ncRNA catabolic process"/>
    <property type="evidence" value="ECO:0000315"/>
    <property type="project" value="BHF-UCL"/>
</dbReference>
<dbReference type="GO" id="GO:1905870">
    <property type="term" value="P:positive regulation of 3'-UTR-mediated mRNA stabilization"/>
    <property type="evidence" value="ECO:0000315"/>
    <property type="project" value="UniProtKB"/>
</dbReference>
<dbReference type="GO" id="GO:0031123">
    <property type="term" value="P:RNA 3'-end processing"/>
    <property type="evidence" value="ECO:0000318"/>
    <property type="project" value="GO_Central"/>
</dbReference>
<dbReference type="GO" id="GO:0006364">
    <property type="term" value="P:rRNA processing"/>
    <property type="evidence" value="ECO:0007669"/>
    <property type="project" value="UniProtKB-KW"/>
</dbReference>
<dbReference type="CDD" id="cd05402">
    <property type="entry name" value="NT_PAP_TUTase"/>
    <property type="match status" value="1"/>
</dbReference>
<dbReference type="FunFam" id="3.30.460.10:FF:000006">
    <property type="entry name" value="non-canonical poly(A) RNA polymerase PAPD5"/>
    <property type="match status" value="1"/>
</dbReference>
<dbReference type="FunFam" id="1.10.1410.10:FF:000015">
    <property type="entry name" value="Terminal nucleotidyltransferase 4B"/>
    <property type="match status" value="1"/>
</dbReference>
<dbReference type="Gene3D" id="1.10.1410.10">
    <property type="match status" value="1"/>
</dbReference>
<dbReference type="Gene3D" id="3.30.460.10">
    <property type="entry name" value="Beta Polymerase, domain 2"/>
    <property type="match status" value="1"/>
</dbReference>
<dbReference type="InterPro" id="IPR054708">
    <property type="entry name" value="MTPAP-like_central"/>
</dbReference>
<dbReference type="InterPro" id="IPR043519">
    <property type="entry name" value="NT_sf"/>
</dbReference>
<dbReference type="InterPro" id="IPR002058">
    <property type="entry name" value="PAP_assoc"/>
</dbReference>
<dbReference type="InterPro" id="IPR045862">
    <property type="entry name" value="Trf4-like"/>
</dbReference>
<dbReference type="PANTHER" id="PTHR23092">
    <property type="entry name" value="POLY(A) RNA POLYMERASE"/>
    <property type="match status" value="1"/>
</dbReference>
<dbReference type="PANTHER" id="PTHR23092:SF51">
    <property type="entry name" value="TERMINAL NUCLEOTIDYLTRANSFERASE 4B"/>
    <property type="match status" value="1"/>
</dbReference>
<dbReference type="Pfam" id="PF22600">
    <property type="entry name" value="MTPAP-like_central"/>
    <property type="match status" value="1"/>
</dbReference>
<dbReference type="Pfam" id="PF03828">
    <property type="entry name" value="PAP_assoc"/>
    <property type="match status" value="1"/>
</dbReference>
<dbReference type="SUPFAM" id="SSF81301">
    <property type="entry name" value="Nucleotidyltransferase"/>
    <property type="match status" value="1"/>
</dbReference>
<dbReference type="SUPFAM" id="SSF81631">
    <property type="entry name" value="PAP/OAS1 substrate-binding domain"/>
    <property type="match status" value="1"/>
</dbReference>
<name>PAPD5_HUMAN</name>